<proteinExistence type="inferred from homology"/>
<reference key="1">
    <citation type="journal article" date="2007" name="PLoS ONE">
        <title>Complete genomic characterization of a pathogenic A.II strain of Francisella tularensis subspecies tularensis.</title>
        <authorList>
            <person name="Beckstrom-Sternberg S.M."/>
            <person name="Auerbach R.K."/>
            <person name="Godbole S."/>
            <person name="Pearson J.V."/>
            <person name="Beckstrom-Sternberg J.S."/>
            <person name="Deng Z."/>
            <person name="Munk C."/>
            <person name="Kubota K."/>
            <person name="Zhou Y."/>
            <person name="Bruce D."/>
            <person name="Noronha J."/>
            <person name="Scheuermann R.H."/>
            <person name="Wang A."/>
            <person name="Wei X."/>
            <person name="Wang J."/>
            <person name="Hao J."/>
            <person name="Wagner D.M."/>
            <person name="Brettin T.S."/>
            <person name="Brown N."/>
            <person name="Gilna P."/>
            <person name="Keim P.S."/>
        </authorList>
    </citation>
    <scope>NUCLEOTIDE SEQUENCE [LARGE SCALE GENOMIC DNA]</scope>
    <source>
        <strain>WY96-3418</strain>
    </source>
</reference>
<feature type="chain" id="PRO_1000031999" description="Elongation factor 4">
    <location>
        <begin position="1"/>
        <end position="594"/>
    </location>
</feature>
<feature type="domain" description="tr-type G">
    <location>
        <begin position="2"/>
        <end position="184"/>
    </location>
</feature>
<feature type="binding site" evidence="1">
    <location>
        <begin position="14"/>
        <end position="19"/>
    </location>
    <ligand>
        <name>GTP</name>
        <dbReference type="ChEBI" id="CHEBI:37565"/>
    </ligand>
</feature>
<feature type="binding site" evidence="1">
    <location>
        <begin position="131"/>
        <end position="134"/>
    </location>
    <ligand>
        <name>GTP</name>
        <dbReference type="ChEBI" id="CHEBI:37565"/>
    </ligand>
</feature>
<comment type="function">
    <text evidence="1">Required for accurate and efficient protein synthesis under certain stress conditions. May act as a fidelity factor of the translation reaction, by catalyzing a one-codon backward translocation of tRNAs on improperly translocated ribosomes. Back-translocation proceeds from a post-translocation (POST) complex to a pre-translocation (PRE) complex, thus giving elongation factor G a second chance to translocate the tRNAs correctly. Binds to ribosomes in a GTP-dependent manner.</text>
</comment>
<comment type="catalytic activity">
    <reaction evidence="1">
        <text>GTP + H2O = GDP + phosphate + H(+)</text>
        <dbReference type="Rhea" id="RHEA:19669"/>
        <dbReference type="ChEBI" id="CHEBI:15377"/>
        <dbReference type="ChEBI" id="CHEBI:15378"/>
        <dbReference type="ChEBI" id="CHEBI:37565"/>
        <dbReference type="ChEBI" id="CHEBI:43474"/>
        <dbReference type="ChEBI" id="CHEBI:58189"/>
        <dbReference type="EC" id="3.6.5.n1"/>
    </reaction>
</comment>
<comment type="subcellular location">
    <subcellularLocation>
        <location evidence="1">Cell inner membrane</location>
        <topology evidence="1">Peripheral membrane protein</topology>
        <orientation evidence="1">Cytoplasmic side</orientation>
    </subcellularLocation>
</comment>
<comment type="similarity">
    <text evidence="1">Belongs to the TRAFAC class translation factor GTPase superfamily. Classic translation factor GTPase family. LepA subfamily.</text>
</comment>
<keyword id="KW-0997">Cell inner membrane</keyword>
<keyword id="KW-1003">Cell membrane</keyword>
<keyword id="KW-0342">GTP-binding</keyword>
<keyword id="KW-0378">Hydrolase</keyword>
<keyword id="KW-0472">Membrane</keyword>
<keyword id="KW-0547">Nucleotide-binding</keyword>
<keyword id="KW-0648">Protein biosynthesis</keyword>
<protein>
    <recommendedName>
        <fullName evidence="1">Elongation factor 4</fullName>
        <shortName evidence="1">EF-4</shortName>
        <ecNumber evidence="1">3.6.5.n1</ecNumber>
    </recommendedName>
    <alternativeName>
        <fullName evidence="1">Ribosomal back-translocase LepA</fullName>
    </alternativeName>
</protein>
<gene>
    <name evidence="1" type="primary">lepA</name>
    <name type="ordered locus">FTW_1939</name>
</gene>
<dbReference type="EC" id="3.6.5.n1" evidence="1"/>
<dbReference type="EMBL" id="CP000608">
    <property type="protein sequence ID" value="ABO47582.1"/>
    <property type="molecule type" value="Genomic_DNA"/>
</dbReference>
<dbReference type="RefSeq" id="WP_003027483.1">
    <property type="nucleotide sequence ID" value="NC_009257.1"/>
</dbReference>
<dbReference type="SMR" id="A4J080"/>
<dbReference type="KEGG" id="ftw:FTW_1939"/>
<dbReference type="HOGENOM" id="CLU_009995_3_3_6"/>
<dbReference type="GO" id="GO:0005886">
    <property type="term" value="C:plasma membrane"/>
    <property type="evidence" value="ECO:0007669"/>
    <property type="project" value="UniProtKB-SubCell"/>
</dbReference>
<dbReference type="GO" id="GO:0005525">
    <property type="term" value="F:GTP binding"/>
    <property type="evidence" value="ECO:0007669"/>
    <property type="project" value="UniProtKB-UniRule"/>
</dbReference>
<dbReference type="GO" id="GO:0003924">
    <property type="term" value="F:GTPase activity"/>
    <property type="evidence" value="ECO:0007669"/>
    <property type="project" value="UniProtKB-UniRule"/>
</dbReference>
<dbReference type="GO" id="GO:0097216">
    <property type="term" value="F:guanosine tetraphosphate binding"/>
    <property type="evidence" value="ECO:0007669"/>
    <property type="project" value="UniProtKB-ARBA"/>
</dbReference>
<dbReference type="GO" id="GO:0043022">
    <property type="term" value="F:ribosome binding"/>
    <property type="evidence" value="ECO:0007669"/>
    <property type="project" value="UniProtKB-UniRule"/>
</dbReference>
<dbReference type="GO" id="GO:0003746">
    <property type="term" value="F:translation elongation factor activity"/>
    <property type="evidence" value="ECO:0007669"/>
    <property type="project" value="UniProtKB-UniRule"/>
</dbReference>
<dbReference type="GO" id="GO:0045727">
    <property type="term" value="P:positive regulation of translation"/>
    <property type="evidence" value="ECO:0007669"/>
    <property type="project" value="UniProtKB-UniRule"/>
</dbReference>
<dbReference type="CDD" id="cd03699">
    <property type="entry name" value="EF4_II"/>
    <property type="match status" value="1"/>
</dbReference>
<dbReference type="CDD" id="cd16260">
    <property type="entry name" value="EF4_III"/>
    <property type="match status" value="1"/>
</dbReference>
<dbReference type="CDD" id="cd01890">
    <property type="entry name" value="LepA"/>
    <property type="match status" value="1"/>
</dbReference>
<dbReference type="CDD" id="cd03709">
    <property type="entry name" value="lepA_C"/>
    <property type="match status" value="1"/>
</dbReference>
<dbReference type="FunFam" id="3.40.50.300:FF:000078">
    <property type="entry name" value="Elongation factor 4"/>
    <property type="match status" value="1"/>
</dbReference>
<dbReference type="FunFam" id="2.40.30.10:FF:000015">
    <property type="entry name" value="Translation factor GUF1, mitochondrial"/>
    <property type="match status" value="1"/>
</dbReference>
<dbReference type="FunFam" id="3.30.70.240:FF:000007">
    <property type="entry name" value="Translation factor GUF1, mitochondrial"/>
    <property type="match status" value="1"/>
</dbReference>
<dbReference type="FunFam" id="3.30.70.2570:FF:000001">
    <property type="entry name" value="Translation factor GUF1, mitochondrial"/>
    <property type="match status" value="1"/>
</dbReference>
<dbReference type="FunFam" id="3.30.70.870:FF:000004">
    <property type="entry name" value="Translation factor GUF1, mitochondrial"/>
    <property type="match status" value="1"/>
</dbReference>
<dbReference type="Gene3D" id="3.30.70.240">
    <property type="match status" value="1"/>
</dbReference>
<dbReference type="Gene3D" id="3.30.70.2570">
    <property type="entry name" value="Elongation factor 4, C-terminal domain"/>
    <property type="match status" value="1"/>
</dbReference>
<dbReference type="Gene3D" id="3.30.70.870">
    <property type="entry name" value="Elongation Factor G (Translational Gtpase), domain 3"/>
    <property type="match status" value="1"/>
</dbReference>
<dbReference type="Gene3D" id="3.40.50.300">
    <property type="entry name" value="P-loop containing nucleotide triphosphate hydrolases"/>
    <property type="match status" value="1"/>
</dbReference>
<dbReference type="Gene3D" id="2.40.30.10">
    <property type="entry name" value="Translation factors"/>
    <property type="match status" value="1"/>
</dbReference>
<dbReference type="HAMAP" id="MF_00071">
    <property type="entry name" value="LepA"/>
    <property type="match status" value="1"/>
</dbReference>
<dbReference type="InterPro" id="IPR006297">
    <property type="entry name" value="EF-4"/>
</dbReference>
<dbReference type="InterPro" id="IPR035647">
    <property type="entry name" value="EFG_III/V"/>
</dbReference>
<dbReference type="InterPro" id="IPR000640">
    <property type="entry name" value="EFG_V-like"/>
</dbReference>
<dbReference type="InterPro" id="IPR004161">
    <property type="entry name" value="EFTu-like_2"/>
</dbReference>
<dbReference type="InterPro" id="IPR031157">
    <property type="entry name" value="G_TR_CS"/>
</dbReference>
<dbReference type="InterPro" id="IPR038363">
    <property type="entry name" value="LepA_C_sf"/>
</dbReference>
<dbReference type="InterPro" id="IPR013842">
    <property type="entry name" value="LepA_CTD"/>
</dbReference>
<dbReference type="InterPro" id="IPR035654">
    <property type="entry name" value="LepA_IV"/>
</dbReference>
<dbReference type="InterPro" id="IPR027417">
    <property type="entry name" value="P-loop_NTPase"/>
</dbReference>
<dbReference type="InterPro" id="IPR005225">
    <property type="entry name" value="Small_GTP-bd"/>
</dbReference>
<dbReference type="InterPro" id="IPR000795">
    <property type="entry name" value="T_Tr_GTP-bd_dom"/>
</dbReference>
<dbReference type="NCBIfam" id="TIGR01393">
    <property type="entry name" value="lepA"/>
    <property type="match status" value="1"/>
</dbReference>
<dbReference type="NCBIfam" id="TIGR00231">
    <property type="entry name" value="small_GTP"/>
    <property type="match status" value="1"/>
</dbReference>
<dbReference type="PANTHER" id="PTHR43512:SF4">
    <property type="entry name" value="TRANSLATION FACTOR GUF1 HOMOLOG, CHLOROPLASTIC"/>
    <property type="match status" value="1"/>
</dbReference>
<dbReference type="PANTHER" id="PTHR43512">
    <property type="entry name" value="TRANSLATION FACTOR GUF1-RELATED"/>
    <property type="match status" value="1"/>
</dbReference>
<dbReference type="Pfam" id="PF00679">
    <property type="entry name" value="EFG_C"/>
    <property type="match status" value="1"/>
</dbReference>
<dbReference type="Pfam" id="PF00009">
    <property type="entry name" value="GTP_EFTU"/>
    <property type="match status" value="1"/>
</dbReference>
<dbReference type="Pfam" id="PF03144">
    <property type="entry name" value="GTP_EFTU_D2"/>
    <property type="match status" value="1"/>
</dbReference>
<dbReference type="Pfam" id="PF06421">
    <property type="entry name" value="LepA_C"/>
    <property type="match status" value="1"/>
</dbReference>
<dbReference type="PRINTS" id="PR00315">
    <property type="entry name" value="ELONGATNFCT"/>
</dbReference>
<dbReference type="SUPFAM" id="SSF54980">
    <property type="entry name" value="EF-G C-terminal domain-like"/>
    <property type="match status" value="2"/>
</dbReference>
<dbReference type="SUPFAM" id="SSF52540">
    <property type="entry name" value="P-loop containing nucleoside triphosphate hydrolases"/>
    <property type="match status" value="1"/>
</dbReference>
<dbReference type="PROSITE" id="PS00301">
    <property type="entry name" value="G_TR_1"/>
    <property type="match status" value="1"/>
</dbReference>
<dbReference type="PROSITE" id="PS51722">
    <property type="entry name" value="G_TR_2"/>
    <property type="match status" value="1"/>
</dbReference>
<accession>A4J080</accession>
<name>LEPA_FRATW</name>
<evidence type="ECO:0000255" key="1">
    <source>
        <dbReference type="HAMAP-Rule" id="MF_00071"/>
    </source>
</evidence>
<organism>
    <name type="scientific">Francisella tularensis subsp. tularensis (strain WY96-3418)</name>
    <dbReference type="NCBI Taxonomy" id="418136"/>
    <lineage>
        <taxon>Bacteria</taxon>
        <taxon>Pseudomonadati</taxon>
        <taxon>Pseudomonadota</taxon>
        <taxon>Gammaproteobacteria</taxon>
        <taxon>Thiotrichales</taxon>
        <taxon>Francisellaceae</taxon>
        <taxon>Francisella</taxon>
    </lineage>
</organism>
<sequence>MKNIRNFSIIAHIDHGKSTLSDRFIQVCNGLSEREMKEQVLDSMDIERERGITIKAQSVTLDYTARDGQTYQLNFIDTPGHVDFSYEVSRSLAACEGALLVVDAAQGVEAQTVANCYTAIEQNLEVIPILNKIDLPSAEPDRVAQEIEKIIGIDATGATTCSAKIGIGVEDVLETIVAKVPAPEGDVNAKLQALIIDSWFDNYLGVVSLVRVKNGTIKKGEKFKVMSTGVAYQVDRLGVFTPKMKDLDHLKAGEVGFIVAGIKDIHGAPVGDTLTHAHNPTDKPVPGFKKVQPQVYAGMFTISSDDYPDFREALEKLSLNDASLFFEPEVSQALGFGFRCGFLGMLHMEIIQERLEREYNLDLITSAPTVVYKAIKKDGEIIEVDNLSKLPEPGAIAEIQEPIVRANILVPKDYVGSVITICIEKRGVQVDLNYVGNQVSITYDLPMIEVVSDFFDTLKSVTKGYGSLDYELIRYEPANMVCLDVLINGDKVDALASIVHKDQAKYKGRELVERLKELIPRQMFEVAIQAAIGGTIVARSTVKALRKNVLAKCYGGDVSRKKKLLEKQKEGKKRMKNIGSVEIPQEAFLSVLKK</sequence>